<dbReference type="EC" id="3.1.21.-" evidence="3"/>
<dbReference type="EC" id="3.6.4.12" evidence="3"/>
<dbReference type="EMBL" id="S47266">
    <property type="protein sequence ID" value="AAB23699.1"/>
    <property type="molecule type" value="Genomic_DNA"/>
</dbReference>
<dbReference type="PIR" id="B44054">
    <property type="entry name" value="B44054"/>
</dbReference>
<dbReference type="KEGG" id="vg:955411"/>
<dbReference type="Proteomes" id="UP000008294">
    <property type="component" value="Segment"/>
</dbReference>
<dbReference type="GO" id="GO:0042025">
    <property type="term" value="C:host cell nucleus"/>
    <property type="evidence" value="ECO:0007669"/>
    <property type="project" value="UniProtKB-SubCell"/>
</dbReference>
<dbReference type="GO" id="GO:0005524">
    <property type="term" value="F:ATP binding"/>
    <property type="evidence" value="ECO:0007669"/>
    <property type="project" value="UniProtKB-KW"/>
</dbReference>
<dbReference type="GO" id="GO:0016887">
    <property type="term" value="F:ATP hydrolysis activity"/>
    <property type="evidence" value="ECO:0007669"/>
    <property type="project" value="RHEA"/>
</dbReference>
<dbReference type="GO" id="GO:0003677">
    <property type="term" value="F:DNA binding"/>
    <property type="evidence" value="ECO:0007669"/>
    <property type="project" value="UniProtKB-KW"/>
</dbReference>
<dbReference type="GO" id="GO:0004519">
    <property type="term" value="F:endonuclease activity"/>
    <property type="evidence" value="ECO:0007669"/>
    <property type="project" value="UniProtKB-KW"/>
</dbReference>
<dbReference type="GO" id="GO:0004386">
    <property type="term" value="F:helicase activity"/>
    <property type="evidence" value="ECO:0007669"/>
    <property type="project" value="UniProtKB-KW"/>
</dbReference>
<dbReference type="GO" id="GO:0046872">
    <property type="term" value="F:metal ion binding"/>
    <property type="evidence" value="ECO:0007669"/>
    <property type="project" value="UniProtKB-KW"/>
</dbReference>
<dbReference type="GO" id="GO:0006260">
    <property type="term" value="P:DNA replication"/>
    <property type="evidence" value="ECO:0007669"/>
    <property type="project" value="UniProtKB-KW"/>
</dbReference>
<dbReference type="GO" id="GO:0039693">
    <property type="term" value="P:viral DNA genome replication"/>
    <property type="evidence" value="ECO:0007669"/>
    <property type="project" value="UniProtKB-KW"/>
</dbReference>
<dbReference type="Gene3D" id="3.40.50.300">
    <property type="entry name" value="P-loop containing nucleotide triphosphate hydrolases"/>
    <property type="match status" value="1"/>
</dbReference>
<dbReference type="InterPro" id="IPR014015">
    <property type="entry name" value="Helicase_SF3_DNA-vir"/>
</dbReference>
<dbReference type="InterPro" id="IPR027417">
    <property type="entry name" value="P-loop_NTPase"/>
</dbReference>
<dbReference type="InterPro" id="IPR001257">
    <property type="entry name" value="Parvovirus_NS1_helicase"/>
</dbReference>
<dbReference type="InterPro" id="IPR049901">
    <property type="entry name" value="PV_NS1-NUC"/>
</dbReference>
<dbReference type="Pfam" id="PF01057">
    <property type="entry name" value="Parvo_NS1"/>
    <property type="match status" value="1"/>
</dbReference>
<dbReference type="SUPFAM" id="SSF52540">
    <property type="entry name" value="P-loop containing nucleoside triphosphate hydrolases"/>
    <property type="match status" value="1"/>
</dbReference>
<dbReference type="PROSITE" id="PS52022">
    <property type="entry name" value="PV_NS1_NUC"/>
    <property type="match status" value="1"/>
</dbReference>
<dbReference type="PROSITE" id="PS51206">
    <property type="entry name" value="SF3_HELICASE_1"/>
    <property type="match status" value="1"/>
</dbReference>
<evidence type="ECO:0000250" key="1">
    <source>
        <dbReference type="UniProtKB" id="D0EZM8"/>
    </source>
</evidence>
<evidence type="ECO:0000250" key="2">
    <source>
        <dbReference type="UniProtKB" id="P03134"/>
    </source>
</evidence>
<evidence type="ECO:0000250" key="3">
    <source>
        <dbReference type="UniProtKB" id="Q9PZT1"/>
    </source>
</evidence>
<evidence type="ECO:0000255" key="4">
    <source>
        <dbReference type="PROSITE-ProRule" id="PRU00551"/>
    </source>
</evidence>
<evidence type="ECO:0000255" key="5">
    <source>
        <dbReference type="PROSITE-ProRule" id="PRU01366"/>
    </source>
</evidence>
<evidence type="ECO:0000256" key="6">
    <source>
        <dbReference type="SAM" id="MobiDB-lite"/>
    </source>
</evidence>
<evidence type="ECO:0000305" key="7"/>
<reference key="1">
    <citation type="journal article" date="1992" name="Virology">
        <title>Complete nucleotide sequence of the cloned infectious genome of Junonia coenia densovirus reveals an organization unique among parvoviruses.</title>
        <authorList>
            <person name="Dumas B."/>
            <person name="Jourdan M."/>
            <person name="Pascaud A.M."/>
            <person name="Bergoin M."/>
        </authorList>
    </citation>
    <scope>NUCLEOTIDE SEQUENCE [GENOMIC DNA]</scope>
</reference>
<organismHost>
    <name type="scientific">Lepidoptera</name>
    <name type="common">butterflies and moths</name>
    <dbReference type="NCBI Taxonomy" id="7088"/>
</organismHost>
<name>NS1_JDNVP</name>
<comment type="function">
    <text evidence="2">Multifunctional protein which displays endonuclease and helicase activities required for initiating and directing viral DNA replication. Also plays a role in viral packaging and transactivation of several promoters. Binds site-specifically to 2-3 approximate tandem copies within the origins of replication (Ori), unwinds this hairpin region and nicks one DNA strand thereby initiating the rolling circle replication (RCR).</text>
</comment>
<comment type="catalytic activity">
    <reaction evidence="2">
        <text>ATP + H2O = ADP + phosphate + H(+)</text>
        <dbReference type="Rhea" id="RHEA:13065"/>
        <dbReference type="ChEBI" id="CHEBI:15377"/>
        <dbReference type="ChEBI" id="CHEBI:15378"/>
        <dbReference type="ChEBI" id="CHEBI:30616"/>
        <dbReference type="ChEBI" id="CHEBI:43474"/>
        <dbReference type="ChEBI" id="CHEBI:456216"/>
        <dbReference type="EC" id="3.6.4.12"/>
    </reaction>
</comment>
<comment type="cofactor">
    <cofactor evidence="2">
        <name>Mg(2+)</name>
        <dbReference type="ChEBI" id="CHEBI:18420"/>
    </cofactor>
    <text evidence="2">The endonuclease active site can probably bind other divalent cations.</text>
</comment>
<comment type="subunit">
    <text evidence="2">Homooligomer.</text>
</comment>
<comment type="subcellular location">
    <subcellularLocation>
        <location evidence="1">Host nucleus</location>
    </subcellularLocation>
</comment>
<comment type="domain">
    <text evidence="2 3">In the N-terminus, the endonuclease region is involved in binding to the origin of replication. In the middle, there are the ATPase and helicase activities (By similarity). The C-terminus probably contains a transactivation domain (By similarity).</text>
</comment>
<comment type="similarity">
    <text evidence="7">Belongs to the parvoviruses initiator protein NS1 family.</text>
</comment>
<sequence length="545" mass="63462">MNNGDTNRETDSTTRPNQDIIRESSGRTSPSEQCSMVANTSRKREWSHGGRGTMASIAKESQENFQYMAEELEKMGSEFFGYVTGQSIKPSSAYISDVIILRDIQLRDQCLDVLREYGRSRRNGLFGFSEEGDHIHVIHDCSYTNRSCRDIWISQVKPFGSVQKTGKPVKFIWEFKRTDWYDVFIYFFVRKRGERAIYVRGESGKIPSNDECVRWTREFKEREMVSSSDCTDYYECEQQEHKISRRSDAGSSNGRLYEKKAYSAGKFAYIRKKTKALLRKYYVSPVSAICDVPEFRDDDLLCDPKNRDYIQAACDDFGKDLNAMSLREIYNLLTEDYNFTDEQELNPYALFISSMKYDNLENSLNIIIELLKFQCNDDEDLIVEFLTNLVNVLDRRIPKLNAFLIISPPSAGKNFFFDMIFGLLLSYGQLGQANRHNLFAFQEAPNKRVLLWNEPNYESSLTDTIKMMFGGDPYTVRVKNRMDAHVKRTPVIILTNNTVPFMYETAFSDRIIQYKWNAAPFLKDYELKPHPMTFFLLLSKYNITF</sequence>
<organism>
    <name type="scientific">Junonia coenia densovirus (isolate pBRJ/1990)</name>
    <name type="common">JcDNV</name>
    <dbReference type="NCBI Taxonomy" id="648250"/>
    <lineage>
        <taxon>Viruses</taxon>
        <taxon>Monodnaviria</taxon>
        <taxon>Shotokuvirae</taxon>
        <taxon>Cossaviricota</taxon>
        <taxon>Quintoviricetes</taxon>
        <taxon>Piccovirales</taxon>
        <taxon>Parvoviridae</taxon>
        <taxon>Densovirinae</taxon>
        <taxon>Ambidensovirus</taxon>
        <taxon>Lepidopteran ambidensovirus 1</taxon>
    </lineage>
</organism>
<protein>
    <recommendedName>
        <fullName evidence="2">Initiator protein NS1</fullName>
        <shortName>NS1</shortName>
        <ecNumber evidence="3">3.1.21.-</ecNumber>
        <ecNumber evidence="3">3.6.4.12</ecNumber>
    </recommendedName>
    <alternativeName>
        <fullName>Non-structural protein 1</fullName>
    </alternativeName>
    <alternativeName>
        <fullName>Non-structural protein NS1</fullName>
    </alternativeName>
</protein>
<proteinExistence type="inferred from homology"/>
<feature type="chain" id="PRO_0000222480" description="Initiator protein NS1">
    <location>
        <begin position="1"/>
        <end position="545"/>
    </location>
</feature>
<feature type="domain" description="PV NS1-Nuc" evidence="5">
    <location>
        <begin position="12"/>
        <end position="277"/>
    </location>
</feature>
<feature type="domain" description="SF3 helicase" evidence="4">
    <location>
        <begin position="346"/>
        <end position="545"/>
    </location>
</feature>
<feature type="region of interest" description="Disordered" evidence="6">
    <location>
        <begin position="1"/>
        <end position="52"/>
    </location>
</feature>
<feature type="short sequence motif" description="RCR-2" evidence="5">
    <location>
        <begin position="134"/>
        <end position="136"/>
    </location>
</feature>
<feature type="compositionally biased region" description="Basic and acidic residues" evidence="6">
    <location>
        <begin position="1"/>
        <end position="12"/>
    </location>
</feature>
<feature type="compositionally biased region" description="Polar residues" evidence="6">
    <location>
        <begin position="26"/>
        <end position="40"/>
    </location>
</feature>
<feature type="binding site" evidence="5">
    <location>
        <position position="130"/>
    </location>
    <ligand>
        <name>a divalent metal cation</name>
        <dbReference type="ChEBI" id="CHEBI:60240"/>
    </ligand>
</feature>
<feature type="binding site" evidence="5">
    <location>
        <position position="134"/>
    </location>
    <ligand>
        <name>a divalent metal cation</name>
        <dbReference type="ChEBI" id="CHEBI:60240"/>
    </ligand>
</feature>
<feature type="binding site" evidence="5">
    <location>
        <position position="136"/>
    </location>
    <ligand>
        <name>a divalent metal cation</name>
        <dbReference type="ChEBI" id="CHEBI:60240"/>
    </ligand>
</feature>
<keyword id="KW-0067">ATP-binding</keyword>
<keyword id="KW-0190">Covalent protein-DNA linkage</keyword>
<keyword id="KW-0235">DNA replication</keyword>
<keyword id="KW-0238">DNA-binding</keyword>
<keyword id="KW-0255">Endonuclease</keyword>
<keyword id="KW-0347">Helicase</keyword>
<keyword id="KW-1048">Host nucleus</keyword>
<keyword id="KW-0378">Hydrolase</keyword>
<keyword id="KW-0460">Magnesium</keyword>
<keyword id="KW-0479">Metal-binding</keyword>
<keyword id="KW-0540">Nuclease</keyword>
<keyword id="KW-0547">Nucleotide-binding</keyword>
<keyword id="KW-1185">Reference proteome</keyword>
<keyword id="KW-0804">Transcription</keyword>
<keyword id="KW-0805">Transcription regulation</keyword>
<keyword id="KW-1194">Viral DNA replication</keyword>
<keyword id="KW-0231">Viral genome packaging</keyword>
<keyword id="KW-1188">Viral release from host cell</keyword>
<gene>
    <name type="primary">NS1</name>
</gene>
<accession>Q90054</accession>